<sequence>MTMPFGYASPEQQVRDKSEYARKGIARGRSVVVLTYENGILFVAENPSATLHKISEIYDRIAFAAVGKYNEFENLRTAGIRLMDSRGYMYDRRDVTSRALANAYAQTLGAIFSESVKPYEVEIVVAEVGTSIADDQIYRLTYDGSIADERGFVAIGGASEQVTTSLKEHHRDGQPLAEALRVAVQALTVGVPPGLPQNGERVLAAANLEVGMLDRTRTRRMFKRIVGPALEGLLAQTSAT</sequence>
<proteinExistence type="inferred from homology"/>
<comment type="function">
    <text evidence="1">Component of the proteasome core, a large protease complex with broad specificity involved in protein degradation.</text>
</comment>
<comment type="activity regulation">
    <text evidence="1">The formation of the proteasomal ATPase ARC-20S proteasome complex, likely via the docking of the C-termini of ARC into the intersubunit pockets in the alpha-rings, may trigger opening of the gate for substrate entry. Interconversion between the open-gate and close-gate conformations leads to a dynamic regulation of the 20S proteasome proteolysis activity.</text>
</comment>
<comment type="pathway">
    <text evidence="1">Protein degradation; proteasomal Pup-dependent pathway.</text>
</comment>
<comment type="subunit">
    <text evidence="1">The 20S proteasome core is composed of 14 alpha and 14 beta subunits that assemble into four stacked heptameric rings, resulting in a barrel-shaped structure. The two inner rings, each composed of seven catalytic beta subunits, are sandwiched by two outer rings, each composed of seven alpha subunits. The catalytic chamber with the active sites is on the inside of the barrel. Has a gated structure, the ends of the cylinder being occluded by the N-termini of the alpha-subunits. Is capped by the proteasome-associated ATPase, ARC.</text>
</comment>
<comment type="subcellular location">
    <subcellularLocation>
        <location evidence="1">Cytoplasm</location>
    </subcellularLocation>
</comment>
<comment type="similarity">
    <text evidence="1">Belongs to the peptidase T1A family.</text>
</comment>
<comment type="sequence caution" evidence="2">
    <conflict type="erroneous initiation">
        <sequence resource="EMBL-CDS" id="ABD11988"/>
    </conflict>
    <text>Truncated N-terminus.</text>
</comment>
<evidence type="ECO:0000255" key="1">
    <source>
        <dbReference type="HAMAP-Rule" id="MF_00289"/>
    </source>
</evidence>
<evidence type="ECO:0000305" key="2"/>
<protein>
    <recommendedName>
        <fullName evidence="1">Proteasome subunit alpha</fullName>
    </recommendedName>
    <alternativeName>
        <fullName evidence="1">20S proteasome alpha subunit</fullName>
    </alternativeName>
    <alternativeName>
        <fullName evidence="1">Proteasome core protein PrcA</fullName>
    </alternativeName>
</protein>
<reference key="1">
    <citation type="journal article" date="2007" name="Genome Res.">
        <title>Genome characteristics of facultatively symbiotic Frankia sp. strains reflect host range and host plant biogeography.</title>
        <authorList>
            <person name="Normand P."/>
            <person name="Lapierre P."/>
            <person name="Tisa L.S."/>
            <person name="Gogarten J.P."/>
            <person name="Alloisio N."/>
            <person name="Bagnarol E."/>
            <person name="Bassi C.A."/>
            <person name="Berry A.M."/>
            <person name="Bickhart D.M."/>
            <person name="Choisne N."/>
            <person name="Couloux A."/>
            <person name="Cournoyer B."/>
            <person name="Cruveiller S."/>
            <person name="Daubin V."/>
            <person name="Demange N."/>
            <person name="Francino M.P."/>
            <person name="Goltsman E."/>
            <person name="Huang Y."/>
            <person name="Kopp O.R."/>
            <person name="Labarre L."/>
            <person name="Lapidus A."/>
            <person name="Lavire C."/>
            <person name="Marechal J."/>
            <person name="Martinez M."/>
            <person name="Mastronunzio J.E."/>
            <person name="Mullin B.C."/>
            <person name="Niemann J."/>
            <person name="Pujic P."/>
            <person name="Rawnsley T."/>
            <person name="Rouy Z."/>
            <person name="Schenowitz C."/>
            <person name="Sellstedt A."/>
            <person name="Tavares F."/>
            <person name="Tomkins J.P."/>
            <person name="Vallenet D."/>
            <person name="Valverde C."/>
            <person name="Wall L.G."/>
            <person name="Wang Y."/>
            <person name="Medigue C."/>
            <person name="Benson D.R."/>
        </authorList>
    </citation>
    <scope>NUCLEOTIDE SEQUENCE [LARGE SCALE GENOMIC DNA]</scope>
    <source>
        <strain>DSM 45818 / CECT 9043 / HFP020203 / CcI3</strain>
    </source>
</reference>
<feature type="chain" id="PRO_0000397138" description="Proteasome subunit alpha">
    <location>
        <begin position="1"/>
        <end position="240"/>
    </location>
</feature>
<dbReference type="EMBL" id="CP000249">
    <property type="protein sequence ID" value="ABD11988.1"/>
    <property type="status" value="ALT_INIT"/>
    <property type="molecule type" value="Genomic_DNA"/>
</dbReference>
<dbReference type="RefSeq" id="WP_023841072.1">
    <property type="nucleotide sequence ID" value="NZ_LRTJ01000046.1"/>
</dbReference>
<dbReference type="SMR" id="Q2J9Q4"/>
<dbReference type="STRING" id="106370.Francci3_2626"/>
<dbReference type="MEROPS" id="T01.980"/>
<dbReference type="KEGG" id="fra:Francci3_2626"/>
<dbReference type="eggNOG" id="COG0638">
    <property type="taxonomic scope" value="Bacteria"/>
</dbReference>
<dbReference type="HOGENOM" id="CLU_071031_0_0_11"/>
<dbReference type="OrthoDB" id="9775643at2"/>
<dbReference type="UniPathway" id="UPA00997"/>
<dbReference type="Proteomes" id="UP000001937">
    <property type="component" value="Chromosome"/>
</dbReference>
<dbReference type="GO" id="GO:0005737">
    <property type="term" value="C:cytoplasm"/>
    <property type="evidence" value="ECO:0007669"/>
    <property type="project" value="UniProtKB-SubCell"/>
</dbReference>
<dbReference type="GO" id="GO:0019773">
    <property type="term" value="C:proteasome core complex, alpha-subunit complex"/>
    <property type="evidence" value="ECO:0007669"/>
    <property type="project" value="UniProtKB-UniRule"/>
</dbReference>
<dbReference type="GO" id="GO:0004298">
    <property type="term" value="F:threonine-type endopeptidase activity"/>
    <property type="evidence" value="ECO:0007669"/>
    <property type="project" value="InterPro"/>
</dbReference>
<dbReference type="GO" id="GO:0019941">
    <property type="term" value="P:modification-dependent protein catabolic process"/>
    <property type="evidence" value="ECO:0007669"/>
    <property type="project" value="UniProtKB-UniRule"/>
</dbReference>
<dbReference type="GO" id="GO:0010498">
    <property type="term" value="P:proteasomal protein catabolic process"/>
    <property type="evidence" value="ECO:0007669"/>
    <property type="project" value="UniProtKB-UniRule"/>
</dbReference>
<dbReference type="CDD" id="cd01906">
    <property type="entry name" value="proteasome_protease_HslV"/>
    <property type="match status" value="1"/>
</dbReference>
<dbReference type="Gene3D" id="3.60.20.10">
    <property type="entry name" value="Glutamine Phosphoribosylpyrophosphate, subunit 1, domain 1"/>
    <property type="match status" value="1"/>
</dbReference>
<dbReference type="HAMAP" id="MF_00289_B">
    <property type="entry name" value="Proteasome_A_B"/>
    <property type="match status" value="1"/>
</dbReference>
<dbReference type="InterPro" id="IPR029055">
    <property type="entry name" value="Ntn_hydrolases_N"/>
</dbReference>
<dbReference type="InterPro" id="IPR050115">
    <property type="entry name" value="Proteasome_alpha"/>
</dbReference>
<dbReference type="InterPro" id="IPR023332">
    <property type="entry name" value="Proteasome_alpha-type"/>
</dbReference>
<dbReference type="InterPro" id="IPR022296">
    <property type="entry name" value="Proteasome_asu_bac"/>
</dbReference>
<dbReference type="InterPro" id="IPR001353">
    <property type="entry name" value="Proteasome_sua/b"/>
</dbReference>
<dbReference type="NCBIfam" id="TIGR03691">
    <property type="entry name" value="20S_bact_alpha"/>
    <property type="match status" value="1"/>
</dbReference>
<dbReference type="PANTHER" id="PTHR11599">
    <property type="entry name" value="PROTEASOME SUBUNIT ALPHA/BETA"/>
    <property type="match status" value="1"/>
</dbReference>
<dbReference type="Pfam" id="PF00227">
    <property type="entry name" value="Proteasome"/>
    <property type="match status" value="1"/>
</dbReference>
<dbReference type="SUPFAM" id="SSF56235">
    <property type="entry name" value="N-terminal nucleophile aminohydrolases (Ntn hydrolases)"/>
    <property type="match status" value="1"/>
</dbReference>
<dbReference type="PROSITE" id="PS51475">
    <property type="entry name" value="PROTEASOME_ALPHA_2"/>
    <property type="match status" value="1"/>
</dbReference>
<accession>Q2J9Q4</accession>
<gene>
    <name evidence="1" type="primary">prcA</name>
    <name type="ordered locus">Francci3_2626</name>
</gene>
<keyword id="KW-0963">Cytoplasm</keyword>
<keyword id="KW-0647">Proteasome</keyword>
<keyword id="KW-1185">Reference proteome</keyword>
<organism>
    <name type="scientific">Frankia casuarinae (strain DSM 45818 / CECT 9043 / HFP020203 / CcI3)</name>
    <dbReference type="NCBI Taxonomy" id="106370"/>
    <lineage>
        <taxon>Bacteria</taxon>
        <taxon>Bacillati</taxon>
        <taxon>Actinomycetota</taxon>
        <taxon>Actinomycetes</taxon>
        <taxon>Frankiales</taxon>
        <taxon>Frankiaceae</taxon>
        <taxon>Frankia</taxon>
    </lineage>
</organism>
<name>PSA_FRACC</name>